<reference key="1">
    <citation type="journal article" date="2005" name="PLoS Biol.">
        <title>The genome sequence of Rickettsia felis identifies the first putative conjugative plasmid in an obligate intracellular parasite.</title>
        <authorList>
            <person name="Ogata H."/>
            <person name="Renesto P."/>
            <person name="Audic S."/>
            <person name="Robert C."/>
            <person name="Blanc G."/>
            <person name="Fournier P.-E."/>
            <person name="Parinello H."/>
            <person name="Claverie J.-M."/>
            <person name="Raoult D."/>
        </authorList>
    </citation>
    <scope>NUCLEOTIDE SEQUENCE [LARGE SCALE GENOMIC DNA]</scope>
    <source>
        <strain>ATCC VR-1525 / URRWXCal2</strain>
    </source>
</reference>
<evidence type="ECO:0000255" key="1">
    <source>
        <dbReference type="HAMAP-Rule" id="MF_00140"/>
    </source>
</evidence>
<dbReference type="EC" id="6.1.1.2" evidence="1"/>
<dbReference type="EMBL" id="CP000053">
    <property type="protein sequence ID" value="AAY61675.1"/>
    <property type="molecule type" value="Genomic_DNA"/>
</dbReference>
<dbReference type="SMR" id="Q4UL98"/>
<dbReference type="STRING" id="315456.RF_0824"/>
<dbReference type="KEGG" id="rfe:RF_0824"/>
<dbReference type="eggNOG" id="COG0180">
    <property type="taxonomic scope" value="Bacteria"/>
</dbReference>
<dbReference type="HOGENOM" id="CLU_029244_1_4_5"/>
<dbReference type="OrthoDB" id="9801042at2"/>
<dbReference type="Proteomes" id="UP000008548">
    <property type="component" value="Chromosome"/>
</dbReference>
<dbReference type="GO" id="GO:0005737">
    <property type="term" value="C:cytoplasm"/>
    <property type="evidence" value="ECO:0007669"/>
    <property type="project" value="UniProtKB-SubCell"/>
</dbReference>
<dbReference type="GO" id="GO:0005524">
    <property type="term" value="F:ATP binding"/>
    <property type="evidence" value="ECO:0007669"/>
    <property type="project" value="UniProtKB-UniRule"/>
</dbReference>
<dbReference type="GO" id="GO:0004830">
    <property type="term" value="F:tryptophan-tRNA ligase activity"/>
    <property type="evidence" value="ECO:0007669"/>
    <property type="project" value="UniProtKB-UniRule"/>
</dbReference>
<dbReference type="GO" id="GO:0006436">
    <property type="term" value="P:tryptophanyl-tRNA aminoacylation"/>
    <property type="evidence" value="ECO:0007669"/>
    <property type="project" value="UniProtKB-UniRule"/>
</dbReference>
<dbReference type="CDD" id="cd00806">
    <property type="entry name" value="TrpRS_core"/>
    <property type="match status" value="1"/>
</dbReference>
<dbReference type="FunFam" id="1.10.240.10:FF:000002">
    <property type="entry name" value="Tryptophan--tRNA ligase"/>
    <property type="match status" value="1"/>
</dbReference>
<dbReference type="Gene3D" id="3.40.50.620">
    <property type="entry name" value="HUPs"/>
    <property type="match status" value="1"/>
</dbReference>
<dbReference type="Gene3D" id="1.10.240.10">
    <property type="entry name" value="Tyrosyl-Transfer RNA Synthetase"/>
    <property type="match status" value="1"/>
</dbReference>
<dbReference type="HAMAP" id="MF_00140_B">
    <property type="entry name" value="Trp_tRNA_synth_B"/>
    <property type="match status" value="1"/>
</dbReference>
<dbReference type="InterPro" id="IPR002305">
    <property type="entry name" value="aa-tRNA-synth_Ic"/>
</dbReference>
<dbReference type="InterPro" id="IPR014729">
    <property type="entry name" value="Rossmann-like_a/b/a_fold"/>
</dbReference>
<dbReference type="InterPro" id="IPR002306">
    <property type="entry name" value="Trp-tRNA-ligase"/>
</dbReference>
<dbReference type="InterPro" id="IPR024109">
    <property type="entry name" value="Trp-tRNA-ligase_bac-type"/>
</dbReference>
<dbReference type="InterPro" id="IPR050203">
    <property type="entry name" value="Trp-tRNA_synthetase"/>
</dbReference>
<dbReference type="NCBIfam" id="TIGR00233">
    <property type="entry name" value="trpS"/>
    <property type="match status" value="1"/>
</dbReference>
<dbReference type="PANTHER" id="PTHR43766">
    <property type="entry name" value="TRYPTOPHAN--TRNA LIGASE, MITOCHONDRIAL"/>
    <property type="match status" value="1"/>
</dbReference>
<dbReference type="PANTHER" id="PTHR43766:SF1">
    <property type="entry name" value="TRYPTOPHAN--TRNA LIGASE, MITOCHONDRIAL"/>
    <property type="match status" value="1"/>
</dbReference>
<dbReference type="Pfam" id="PF00579">
    <property type="entry name" value="tRNA-synt_1b"/>
    <property type="match status" value="1"/>
</dbReference>
<dbReference type="PRINTS" id="PR01039">
    <property type="entry name" value="TRNASYNTHTRP"/>
</dbReference>
<dbReference type="SUPFAM" id="SSF52374">
    <property type="entry name" value="Nucleotidylyl transferase"/>
    <property type="match status" value="1"/>
</dbReference>
<sequence length="330" mass="37619">MKKTVLSGVQATGSLHLGNYLGSIRNWVKMQEEYNCFFFLADLHAITVDIKPSELNNSIMGVLAVYLAAGLNPDKVTIFAQSMVKEHAELAWLLNCVTPLGWLKRMTQFKDKAGSDQEKACLGLFSYPVLMAADILIYKADIVPVGEDQKQHLELTRDIAGVINRRFDKEILKVPEVLISETGTRIMSLRDGLKKMSKSDISDFSRINLKDDNDLIHQKIKKAKTDHLSFVSYDKETRPEISNLLDIYRSLSEESLEKIINNYQNQGFSKFKEDLAEIIITNLQPIRDKYLELMNDKEYLLKILHKGAEKARIRASETVNEVKEQFGFVI</sequence>
<accession>Q4UL98</accession>
<organism>
    <name type="scientific">Rickettsia felis (strain ATCC VR-1525 / URRWXCal2)</name>
    <name type="common">Rickettsia azadi</name>
    <dbReference type="NCBI Taxonomy" id="315456"/>
    <lineage>
        <taxon>Bacteria</taxon>
        <taxon>Pseudomonadati</taxon>
        <taxon>Pseudomonadota</taxon>
        <taxon>Alphaproteobacteria</taxon>
        <taxon>Rickettsiales</taxon>
        <taxon>Rickettsiaceae</taxon>
        <taxon>Rickettsieae</taxon>
        <taxon>Rickettsia</taxon>
        <taxon>spotted fever group</taxon>
    </lineage>
</organism>
<gene>
    <name evidence="1" type="primary">trpS</name>
    <name type="ordered locus">RF_0824</name>
</gene>
<protein>
    <recommendedName>
        <fullName evidence="1">Tryptophan--tRNA ligase</fullName>
        <ecNumber evidence="1">6.1.1.2</ecNumber>
    </recommendedName>
    <alternativeName>
        <fullName evidence="1">Tryptophanyl-tRNA synthetase</fullName>
        <shortName evidence="1">TrpRS</shortName>
    </alternativeName>
</protein>
<proteinExistence type="inferred from homology"/>
<feature type="chain" id="PRO_0000274851" description="Tryptophan--tRNA ligase">
    <location>
        <begin position="1"/>
        <end position="330"/>
    </location>
</feature>
<feature type="short sequence motif" description="'HIGH' region" evidence="1">
    <location>
        <begin position="11"/>
        <end position="19"/>
    </location>
</feature>
<feature type="short sequence motif" description="'KMSKS' region" evidence="1">
    <location>
        <begin position="195"/>
        <end position="199"/>
    </location>
</feature>
<feature type="binding site" evidence="1">
    <location>
        <begin position="10"/>
        <end position="12"/>
    </location>
    <ligand>
        <name>ATP</name>
        <dbReference type="ChEBI" id="CHEBI:30616"/>
    </ligand>
</feature>
<feature type="binding site" evidence="1">
    <location>
        <begin position="18"/>
        <end position="19"/>
    </location>
    <ligand>
        <name>ATP</name>
        <dbReference type="ChEBI" id="CHEBI:30616"/>
    </ligand>
</feature>
<feature type="binding site" evidence="1">
    <location>
        <position position="134"/>
    </location>
    <ligand>
        <name>L-tryptophan</name>
        <dbReference type="ChEBI" id="CHEBI:57912"/>
    </ligand>
</feature>
<feature type="binding site" evidence="1">
    <location>
        <begin position="146"/>
        <end position="148"/>
    </location>
    <ligand>
        <name>ATP</name>
        <dbReference type="ChEBI" id="CHEBI:30616"/>
    </ligand>
</feature>
<feature type="binding site" evidence="1">
    <location>
        <position position="186"/>
    </location>
    <ligand>
        <name>ATP</name>
        <dbReference type="ChEBI" id="CHEBI:30616"/>
    </ligand>
</feature>
<feature type="binding site" evidence="1">
    <location>
        <begin position="195"/>
        <end position="199"/>
    </location>
    <ligand>
        <name>ATP</name>
        <dbReference type="ChEBI" id="CHEBI:30616"/>
    </ligand>
</feature>
<name>SYW_RICFE</name>
<comment type="function">
    <text evidence="1">Catalyzes the attachment of tryptophan to tRNA(Trp).</text>
</comment>
<comment type="catalytic activity">
    <reaction evidence="1">
        <text>tRNA(Trp) + L-tryptophan + ATP = L-tryptophyl-tRNA(Trp) + AMP + diphosphate + H(+)</text>
        <dbReference type="Rhea" id="RHEA:24080"/>
        <dbReference type="Rhea" id="RHEA-COMP:9671"/>
        <dbReference type="Rhea" id="RHEA-COMP:9705"/>
        <dbReference type="ChEBI" id="CHEBI:15378"/>
        <dbReference type="ChEBI" id="CHEBI:30616"/>
        <dbReference type="ChEBI" id="CHEBI:33019"/>
        <dbReference type="ChEBI" id="CHEBI:57912"/>
        <dbReference type="ChEBI" id="CHEBI:78442"/>
        <dbReference type="ChEBI" id="CHEBI:78535"/>
        <dbReference type="ChEBI" id="CHEBI:456215"/>
        <dbReference type="EC" id="6.1.1.2"/>
    </reaction>
</comment>
<comment type="subunit">
    <text evidence="1">Homodimer.</text>
</comment>
<comment type="subcellular location">
    <subcellularLocation>
        <location evidence="1">Cytoplasm</location>
    </subcellularLocation>
</comment>
<comment type="similarity">
    <text evidence="1">Belongs to the class-I aminoacyl-tRNA synthetase family.</text>
</comment>
<keyword id="KW-0030">Aminoacyl-tRNA synthetase</keyword>
<keyword id="KW-0067">ATP-binding</keyword>
<keyword id="KW-0963">Cytoplasm</keyword>
<keyword id="KW-0436">Ligase</keyword>
<keyword id="KW-0547">Nucleotide-binding</keyword>
<keyword id="KW-0648">Protein biosynthesis</keyword>